<name>NRX3_ORYSJ</name>
<organism>
    <name type="scientific">Oryza sativa subsp. japonica</name>
    <name type="common">Rice</name>
    <dbReference type="NCBI Taxonomy" id="39947"/>
    <lineage>
        <taxon>Eukaryota</taxon>
        <taxon>Viridiplantae</taxon>
        <taxon>Streptophyta</taxon>
        <taxon>Embryophyta</taxon>
        <taxon>Tracheophyta</taxon>
        <taxon>Spermatophyta</taxon>
        <taxon>Magnoliopsida</taxon>
        <taxon>Liliopsida</taxon>
        <taxon>Poales</taxon>
        <taxon>Poaceae</taxon>
        <taxon>BOP clade</taxon>
        <taxon>Oryzoideae</taxon>
        <taxon>Oryzeae</taxon>
        <taxon>Oryzinae</taxon>
        <taxon>Oryza</taxon>
        <taxon>Oryza sativa</taxon>
    </lineage>
</organism>
<accession>Q7XPE8</accession>
<accession>Q0JAA8</accession>
<feature type="chain" id="PRO_0000394852" description="Probable nucleoredoxin 3">
    <location>
        <begin position="1"/>
        <end position="471"/>
    </location>
</feature>
<feature type="domain" description="Thioredoxin 1" evidence="1">
    <location>
        <begin position="15"/>
        <end position="173"/>
    </location>
</feature>
<feature type="domain" description="Thioredoxin 2" evidence="1">
    <location>
        <begin position="179"/>
        <end position="334"/>
    </location>
</feature>
<comment type="function">
    <text>Probable thiol-disulfide oxidoreductase that may participate in various redox reactions.</text>
</comment>
<comment type="catalytic activity">
    <reaction>
        <text>[protein]-dithiol + NAD(+) = [protein]-disulfide + NADH + H(+)</text>
        <dbReference type="Rhea" id="RHEA:18749"/>
        <dbReference type="Rhea" id="RHEA-COMP:10593"/>
        <dbReference type="Rhea" id="RHEA-COMP:10594"/>
        <dbReference type="ChEBI" id="CHEBI:15378"/>
        <dbReference type="ChEBI" id="CHEBI:29950"/>
        <dbReference type="ChEBI" id="CHEBI:50058"/>
        <dbReference type="ChEBI" id="CHEBI:57540"/>
        <dbReference type="ChEBI" id="CHEBI:57945"/>
        <dbReference type="EC" id="1.8.1.8"/>
    </reaction>
</comment>
<comment type="catalytic activity">
    <reaction>
        <text>[protein]-dithiol + NADP(+) = [protein]-disulfide + NADPH + H(+)</text>
        <dbReference type="Rhea" id="RHEA:18753"/>
        <dbReference type="Rhea" id="RHEA-COMP:10593"/>
        <dbReference type="Rhea" id="RHEA-COMP:10594"/>
        <dbReference type="ChEBI" id="CHEBI:15378"/>
        <dbReference type="ChEBI" id="CHEBI:29950"/>
        <dbReference type="ChEBI" id="CHEBI:50058"/>
        <dbReference type="ChEBI" id="CHEBI:57783"/>
        <dbReference type="ChEBI" id="CHEBI:58349"/>
        <dbReference type="EC" id="1.8.1.8"/>
    </reaction>
</comment>
<comment type="similarity">
    <text evidence="2">Belongs to the nucleoredoxin family.</text>
</comment>
<comment type="sequence caution" evidence="2">
    <conflict type="erroneous gene model prediction">
        <sequence resource="EMBL-CDS" id="BAF15729"/>
    </conflict>
</comment>
<keyword id="KW-0520">NAD</keyword>
<keyword id="KW-0560">Oxidoreductase</keyword>
<keyword id="KW-1185">Reference proteome</keyword>
<keyword id="KW-0677">Repeat</keyword>
<evidence type="ECO:0000255" key="1">
    <source>
        <dbReference type="PROSITE-ProRule" id="PRU00691"/>
    </source>
</evidence>
<evidence type="ECO:0000305" key="2"/>
<protein>
    <recommendedName>
        <fullName>Probable nucleoredoxin 3</fullName>
        <shortName>OsNrx3</shortName>
        <ecNumber>1.8.1.8</ecNumber>
    </recommendedName>
</protein>
<dbReference type="EC" id="1.8.1.8"/>
<dbReference type="EMBL" id="AL606691">
    <property type="protein sequence ID" value="CAE03648.2"/>
    <property type="molecule type" value="Genomic_DNA"/>
</dbReference>
<dbReference type="EMBL" id="AP008210">
    <property type="protein sequence ID" value="BAF15729.2"/>
    <property type="status" value="ALT_SEQ"/>
    <property type="molecule type" value="Genomic_DNA"/>
</dbReference>
<dbReference type="EMBL" id="AP014960">
    <property type="status" value="NOT_ANNOTATED_CDS"/>
    <property type="molecule type" value="Genomic_DNA"/>
</dbReference>
<dbReference type="SMR" id="Q7XPE8"/>
<dbReference type="FunCoup" id="Q7XPE8">
    <property type="interactions" value="92"/>
</dbReference>
<dbReference type="STRING" id="39947.Q7XPE8"/>
<dbReference type="PaxDb" id="39947-Q7XPE8"/>
<dbReference type="KEGG" id="dosa:Os04g0608600"/>
<dbReference type="eggNOG" id="KOG2501">
    <property type="taxonomic scope" value="Eukaryota"/>
</dbReference>
<dbReference type="InParanoid" id="Q7XPE8"/>
<dbReference type="Proteomes" id="UP000000763">
    <property type="component" value="Chromosome 4"/>
</dbReference>
<dbReference type="Proteomes" id="UP000059680">
    <property type="component" value="Chromosome 4"/>
</dbReference>
<dbReference type="GO" id="GO:0004791">
    <property type="term" value="F:thioredoxin-disulfide reductase (NADPH) activity"/>
    <property type="evidence" value="ECO:0007669"/>
    <property type="project" value="InterPro"/>
</dbReference>
<dbReference type="CDD" id="cd03009">
    <property type="entry name" value="TryX_like_TryX_NRX"/>
    <property type="match status" value="2"/>
</dbReference>
<dbReference type="Gene3D" id="3.40.30.10">
    <property type="entry name" value="Glutaredoxin"/>
    <property type="match status" value="2"/>
</dbReference>
<dbReference type="InterPro" id="IPR052259">
    <property type="entry name" value="Nucleoredoxin-like"/>
</dbReference>
<dbReference type="InterPro" id="IPR012336">
    <property type="entry name" value="Thioredoxin-like_fold"/>
</dbReference>
<dbReference type="InterPro" id="IPR036249">
    <property type="entry name" value="Thioredoxin-like_sf"/>
</dbReference>
<dbReference type="InterPro" id="IPR013766">
    <property type="entry name" value="Thioredoxin_domain"/>
</dbReference>
<dbReference type="InterPro" id="IPR045870">
    <property type="entry name" value="TryX_NRX_thioredoxin_dom"/>
</dbReference>
<dbReference type="PANTHER" id="PTHR13871:SF81">
    <property type="entry name" value="NUCLEOREDOXIN 3-RELATED"/>
    <property type="match status" value="1"/>
</dbReference>
<dbReference type="PANTHER" id="PTHR13871">
    <property type="entry name" value="THIOREDOXIN"/>
    <property type="match status" value="1"/>
</dbReference>
<dbReference type="Pfam" id="PF13905">
    <property type="entry name" value="Thioredoxin_8"/>
    <property type="match status" value="2"/>
</dbReference>
<dbReference type="SUPFAM" id="SSF52833">
    <property type="entry name" value="Thioredoxin-like"/>
    <property type="match status" value="2"/>
</dbReference>
<dbReference type="PROSITE" id="PS51352">
    <property type="entry name" value="THIOREDOXIN_2"/>
    <property type="match status" value="2"/>
</dbReference>
<proteinExistence type="inferred from homology"/>
<sequence>MGETAEGVEAGEKYVSIPQLAGVGTLLSNGGKEIPLSSIEGKRICLFFSAHWCRPCRNFTPKLLQIYRKLRNTCKNMEIIFISLDRDEISFLDYFKGMPWLALPFDTGLRQKLCVQFDIEHIPALIPLSTTLSHGFRVEEDAVKLVEEYGVDAYPFGAKRRSELEGMDDARRQGGNLLQLLGCKEREYVISADGIKTPISDLNGKTIGLYFGAHWCPPCRAFTKQLREAYDELKALRPGNFQVIFISMDRNEEEFQASLSAMPWFAIPYSDTTVQELSRIFTIKGIPTLLILGPDGKVFKTDGRRIISKYGAMAFPFTESRAYELEEVLKKERDSLPHRVRDHRHEHELELDMAKAYLSTQLFHQTPSVQPCRLNLKTLREEYHLIFTNSNRKTSRPQSSYTRQQRDLNNLYSDPKHLPQLHKHFDQSNVATAENSLRFLNGEPENSDISSIHVAFADLAGKIRGEDDKRD</sequence>
<gene>
    <name type="ordered locus">Os04g0608600</name>
    <name type="ordered locus">LOC_Os04g51920</name>
    <name type="ORF">OSJNBa0060N03.13</name>
</gene>
<reference key="1">
    <citation type="journal article" date="2002" name="Nature">
        <title>Sequence and analysis of rice chromosome 4.</title>
        <authorList>
            <person name="Feng Q."/>
            <person name="Zhang Y."/>
            <person name="Hao P."/>
            <person name="Wang S."/>
            <person name="Fu G."/>
            <person name="Huang Y."/>
            <person name="Li Y."/>
            <person name="Zhu J."/>
            <person name="Liu Y."/>
            <person name="Hu X."/>
            <person name="Jia P."/>
            <person name="Zhang Y."/>
            <person name="Zhao Q."/>
            <person name="Ying K."/>
            <person name="Yu S."/>
            <person name="Tang Y."/>
            <person name="Weng Q."/>
            <person name="Zhang L."/>
            <person name="Lu Y."/>
            <person name="Mu J."/>
            <person name="Lu Y."/>
            <person name="Zhang L.S."/>
            <person name="Yu Z."/>
            <person name="Fan D."/>
            <person name="Liu X."/>
            <person name="Lu T."/>
            <person name="Li C."/>
            <person name="Wu Y."/>
            <person name="Sun T."/>
            <person name="Lei H."/>
            <person name="Li T."/>
            <person name="Hu H."/>
            <person name="Guan J."/>
            <person name="Wu M."/>
            <person name="Zhang R."/>
            <person name="Zhou B."/>
            <person name="Chen Z."/>
            <person name="Chen L."/>
            <person name="Jin Z."/>
            <person name="Wang R."/>
            <person name="Yin H."/>
            <person name="Cai Z."/>
            <person name="Ren S."/>
            <person name="Lv G."/>
            <person name="Gu W."/>
            <person name="Zhu G."/>
            <person name="Tu Y."/>
            <person name="Jia J."/>
            <person name="Zhang Y."/>
            <person name="Chen J."/>
            <person name="Kang H."/>
            <person name="Chen X."/>
            <person name="Shao C."/>
            <person name="Sun Y."/>
            <person name="Hu Q."/>
            <person name="Zhang X."/>
            <person name="Zhang W."/>
            <person name="Wang L."/>
            <person name="Ding C."/>
            <person name="Sheng H."/>
            <person name="Gu J."/>
            <person name="Chen S."/>
            <person name="Ni L."/>
            <person name="Zhu F."/>
            <person name="Chen W."/>
            <person name="Lan L."/>
            <person name="Lai Y."/>
            <person name="Cheng Z."/>
            <person name="Gu M."/>
            <person name="Jiang J."/>
            <person name="Li J."/>
            <person name="Hong G."/>
            <person name="Xue Y."/>
            <person name="Han B."/>
        </authorList>
    </citation>
    <scope>NUCLEOTIDE SEQUENCE [LARGE SCALE GENOMIC DNA]</scope>
    <source>
        <strain>cv. Nipponbare</strain>
    </source>
</reference>
<reference key="2">
    <citation type="journal article" date="2005" name="Nature">
        <title>The map-based sequence of the rice genome.</title>
        <authorList>
            <consortium name="International rice genome sequencing project (IRGSP)"/>
        </authorList>
    </citation>
    <scope>NUCLEOTIDE SEQUENCE [LARGE SCALE GENOMIC DNA]</scope>
    <source>
        <strain>cv. Nipponbare</strain>
    </source>
</reference>
<reference key="3">
    <citation type="journal article" date="2008" name="Nucleic Acids Res.">
        <title>The rice annotation project database (RAP-DB): 2008 update.</title>
        <authorList>
            <consortium name="The rice annotation project (RAP)"/>
        </authorList>
    </citation>
    <scope>GENOME REANNOTATION</scope>
    <source>
        <strain>cv. Nipponbare</strain>
    </source>
</reference>
<reference key="4">
    <citation type="journal article" date="2013" name="Rice">
        <title>Improvement of the Oryza sativa Nipponbare reference genome using next generation sequence and optical map data.</title>
        <authorList>
            <person name="Kawahara Y."/>
            <person name="de la Bastide M."/>
            <person name="Hamilton J.P."/>
            <person name="Kanamori H."/>
            <person name="McCombie W.R."/>
            <person name="Ouyang S."/>
            <person name="Schwartz D.C."/>
            <person name="Tanaka T."/>
            <person name="Wu J."/>
            <person name="Zhou S."/>
            <person name="Childs K.L."/>
            <person name="Davidson R.M."/>
            <person name="Lin H."/>
            <person name="Quesada-Ocampo L."/>
            <person name="Vaillancourt B."/>
            <person name="Sakai H."/>
            <person name="Lee S.S."/>
            <person name="Kim J."/>
            <person name="Numa H."/>
            <person name="Itoh T."/>
            <person name="Buell C.R."/>
            <person name="Matsumoto T."/>
        </authorList>
    </citation>
    <scope>GENOME REANNOTATION</scope>
    <source>
        <strain>cv. Nipponbare</strain>
    </source>
</reference>
<reference key="5">
    <citation type="journal article" date="2009" name="Mol. Plant">
        <title>Comparative genomic study of the thioredoxin family in photosynthetic organisms with emphasis on Populus trichocarpa.</title>
        <authorList>
            <person name="Chibani K."/>
            <person name="Wingsle G."/>
            <person name="Jacquot J.P."/>
            <person name="Gelhaye E."/>
            <person name="Rouhier N."/>
        </authorList>
    </citation>
    <scope>GENE FAMILY</scope>
    <scope>NOMENCLATURE</scope>
</reference>